<evidence type="ECO:0000250" key="1"/>
<evidence type="ECO:0000305" key="2"/>
<proteinExistence type="inferred from homology"/>
<gene>
    <name type="primary">leuB</name>
    <name type="ordered locus">Atu2791</name>
    <name type="ORF">AGR_C_5067</name>
</gene>
<name>LEU3_AGRFC</name>
<protein>
    <recommendedName>
        <fullName>3-isopropylmalate dehydrogenase</fullName>
        <ecNumber>1.1.1.85</ecNumber>
    </recommendedName>
    <alternativeName>
        <fullName>3-IPM-DH</fullName>
    </alternativeName>
    <alternativeName>
        <fullName>Beta-IPM dehydrogenase</fullName>
        <shortName>IMDH</shortName>
    </alternativeName>
</protein>
<feature type="chain" id="PRO_0000083627" description="3-isopropylmalate dehydrogenase">
    <location>
        <begin position="1"/>
        <end position="370"/>
    </location>
</feature>
<feature type="binding site" evidence="1">
    <location>
        <begin position="77"/>
        <end position="90"/>
    </location>
    <ligand>
        <name>NAD(+)</name>
        <dbReference type="ChEBI" id="CHEBI:57540"/>
    </ligand>
</feature>
<feature type="binding site" evidence="1">
    <location>
        <position position="97"/>
    </location>
    <ligand>
        <name>substrate</name>
    </ligand>
</feature>
<feature type="binding site" evidence="1">
    <location>
        <position position="107"/>
    </location>
    <ligand>
        <name>substrate</name>
    </ligand>
</feature>
<feature type="binding site" evidence="1">
    <location>
        <position position="135"/>
    </location>
    <ligand>
        <name>substrate</name>
    </ligand>
</feature>
<feature type="binding site" evidence="1">
    <location>
        <position position="226"/>
    </location>
    <ligand>
        <name>Mg(2+)</name>
        <dbReference type="ChEBI" id="CHEBI:18420"/>
    </ligand>
</feature>
<feature type="binding site" evidence="1">
    <location>
        <position position="226"/>
    </location>
    <ligand>
        <name>substrate</name>
    </ligand>
</feature>
<feature type="binding site" evidence="1">
    <location>
        <position position="250"/>
    </location>
    <ligand>
        <name>Mg(2+)</name>
        <dbReference type="ChEBI" id="CHEBI:18420"/>
    </ligand>
</feature>
<feature type="binding site" evidence="1">
    <location>
        <position position="254"/>
    </location>
    <ligand>
        <name>Mg(2+)</name>
        <dbReference type="ChEBI" id="CHEBI:18420"/>
    </ligand>
</feature>
<feature type="binding site" evidence="1">
    <location>
        <begin position="290"/>
        <end position="302"/>
    </location>
    <ligand>
        <name>NAD(+)</name>
        <dbReference type="ChEBI" id="CHEBI:57540"/>
    </ligand>
</feature>
<feature type="site" description="Important for catalysis" evidence="1">
    <location>
        <position position="142"/>
    </location>
</feature>
<feature type="site" description="Important for catalysis" evidence="1">
    <location>
        <position position="193"/>
    </location>
</feature>
<feature type="sequence conflict" description="In Ref. 1; AAA22089." evidence="2" ref="1">
    <original>L</original>
    <variation>V</variation>
    <location>
        <position position="6"/>
    </location>
</feature>
<keyword id="KW-0028">Amino-acid biosynthesis</keyword>
<keyword id="KW-0100">Branched-chain amino acid biosynthesis</keyword>
<keyword id="KW-0963">Cytoplasm</keyword>
<keyword id="KW-0432">Leucine biosynthesis</keyword>
<keyword id="KW-0460">Magnesium</keyword>
<keyword id="KW-0464">Manganese</keyword>
<keyword id="KW-0479">Metal-binding</keyword>
<keyword id="KW-0520">NAD</keyword>
<keyword id="KW-0560">Oxidoreductase</keyword>
<keyword id="KW-1185">Reference proteome</keyword>
<reference key="1">
    <citation type="journal article" date="1986" name="Dokl. Akad. Nauk SSSR">
        <title>Beta-isopropyl malate dehydrogenase gene of Agrobacterium tumefaciens C58: coding and primary structure.</title>
        <authorList>
            <person name="Strizhov N.I."/>
            <person name="Kryukov V.M."/>
            <person name="Bur'Yanov Y.I."/>
            <person name="Beav A.A."/>
        </authorList>
    </citation>
    <scope>NUCLEOTIDE SEQUENCE [GENOMIC DNA]</scope>
</reference>
<reference key="2">
    <citation type="journal article" date="2001" name="Science">
        <title>The genome of the natural genetic engineer Agrobacterium tumefaciens C58.</title>
        <authorList>
            <person name="Wood D.W."/>
            <person name="Setubal J.C."/>
            <person name="Kaul R."/>
            <person name="Monks D.E."/>
            <person name="Kitajima J.P."/>
            <person name="Okura V.K."/>
            <person name="Zhou Y."/>
            <person name="Chen L."/>
            <person name="Wood G.E."/>
            <person name="Almeida N.F. Jr."/>
            <person name="Woo L."/>
            <person name="Chen Y."/>
            <person name="Paulsen I.T."/>
            <person name="Eisen J.A."/>
            <person name="Karp P.D."/>
            <person name="Bovee D. Sr."/>
            <person name="Chapman P."/>
            <person name="Clendenning J."/>
            <person name="Deatherage G."/>
            <person name="Gillet W."/>
            <person name="Grant C."/>
            <person name="Kutyavin T."/>
            <person name="Levy R."/>
            <person name="Li M.-J."/>
            <person name="McClelland E."/>
            <person name="Palmieri A."/>
            <person name="Raymond C."/>
            <person name="Rouse G."/>
            <person name="Saenphimmachak C."/>
            <person name="Wu Z."/>
            <person name="Romero P."/>
            <person name="Gordon D."/>
            <person name="Zhang S."/>
            <person name="Yoo H."/>
            <person name="Tao Y."/>
            <person name="Biddle P."/>
            <person name="Jung M."/>
            <person name="Krespan W."/>
            <person name="Perry M."/>
            <person name="Gordon-Kamm B."/>
            <person name="Liao L."/>
            <person name="Kim S."/>
            <person name="Hendrick C."/>
            <person name="Zhao Z.-Y."/>
            <person name="Dolan M."/>
            <person name="Chumley F."/>
            <person name="Tingey S.V."/>
            <person name="Tomb J.-F."/>
            <person name="Gordon M.P."/>
            <person name="Olson M.V."/>
            <person name="Nester E.W."/>
        </authorList>
    </citation>
    <scope>NUCLEOTIDE SEQUENCE [LARGE SCALE GENOMIC DNA]</scope>
    <source>
        <strain>C58 / ATCC 33970</strain>
    </source>
</reference>
<reference key="3">
    <citation type="journal article" date="2001" name="Science">
        <title>Genome sequence of the plant pathogen and biotechnology agent Agrobacterium tumefaciens C58.</title>
        <authorList>
            <person name="Goodner B."/>
            <person name="Hinkle G."/>
            <person name="Gattung S."/>
            <person name="Miller N."/>
            <person name="Blanchard M."/>
            <person name="Qurollo B."/>
            <person name="Goldman B.S."/>
            <person name="Cao Y."/>
            <person name="Askenazi M."/>
            <person name="Halling C."/>
            <person name="Mullin L."/>
            <person name="Houmiel K."/>
            <person name="Gordon J."/>
            <person name="Vaudin M."/>
            <person name="Iartchouk O."/>
            <person name="Epp A."/>
            <person name="Liu F."/>
            <person name="Wollam C."/>
            <person name="Allinger M."/>
            <person name="Doughty D."/>
            <person name="Scott C."/>
            <person name="Lappas C."/>
            <person name="Markelz B."/>
            <person name="Flanagan C."/>
            <person name="Crowell C."/>
            <person name="Gurson J."/>
            <person name="Lomo C."/>
            <person name="Sear C."/>
            <person name="Strub G."/>
            <person name="Cielo C."/>
            <person name="Slater S."/>
        </authorList>
    </citation>
    <scope>NUCLEOTIDE SEQUENCE [LARGE SCALE GENOMIC DNA]</scope>
    <source>
        <strain>C58 / ATCC 33970</strain>
    </source>
</reference>
<accession>P24404</accession>
<organism>
    <name type="scientific">Agrobacterium fabrum (strain C58 / ATCC 33970)</name>
    <name type="common">Agrobacterium tumefaciens (strain C58)</name>
    <dbReference type="NCBI Taxonomy" id="176299"/>
    <lineage>
        <taxon>Bacteria</taxon>
        <taxon>Pseudomonadati</taxon>
        <taxon>Pseudomonadota</taxon>
        <taxon>Alphaproteobacteria</taxon>
        <taxon>Hyphomicrobiales</taxon>
        <taxon>Rhizobiaceae</taxon>
        <taxon>Rhizobium/Agrobacterium group</taxon>
        <taxon>Agrobacterium</taxon>
        <taxon>Agrobacterium tumefaciens complex</taxon>
    </lineage>
</organism>
<dbReference type="EC" id="1.1.1.85"/>
<dbReference type="EMBL" id="M38670">
    <property type="protein sequence ID" value="AAA22089.1"/>
    <property type="molecule type" value="Genomic_DNA"/>
</dbReference>
<dbReference type="EMBL" id="AE007869">
    <property type="protein sequence ID" value="AAK88504.1"/>
    <property type="molecule type" value="Genomic_DNA"/>
</dbReference>
<dbReference type="PIR" id="AF2919">
    <property type="entry name" value="AF2919"/>
</dbReference>
<dbReference type="PIR" id="G97693">
    <property type="entry name" value="G97693"/>
</dbReference>
<dbReference type="RefSeq" id="NP_355719.1">
    <property type="nucleotide sequence ID" value="NC_003062.2"/>
</dbReference>
<dbReference type="RefSeq" id="WP_010972566.1">
    <property type="nucleotide sequence ID" value="NC_003062.2"/>
</dbReference>
<dbReference type="SMR" id="P24404"/>
<dbReference type="STRING" id="176299.Atu2791"/>
<dbReference type="EnsemblBacteria" id="AAK88504">
    <property type="protein sequence ID" value="AAK88504"/>
    <property type="gene ID" value="Atu2791"/>
</dbReference>
<dbReference type="GeneID" id="1134829"/>
<dbReference type="KEGG" id="atu:Atu2791"/>
<dbReference type="PATRIC" id="fig|176299.10.peg.2801"/>
<dbReference type="eggNOG" id="COG0473">
    <property type="taxonomic scope" value="Bacteria"/>
</dbReference>
<dbReference type="HOGENOM" id="CLU_031953_0_3_5"/>
<dbReference type="OrthoDB" id="9767905at2"/>
<dbReference type="PhylomeDB" id="P24404"/>
<dbReference type="BioCyc" id="AGRO:ATU2791-MONOMER"/>
<dbReference type="BRENDA" id="1.1.1.85">
    <property type="organism ID" value="200"/>
</dbReference>
<dbReference type="UniPathway" id="UPA00048">
    <property type="reaction ID" value="UER00072"/>
</dbReference>
<dbReference type="Proteomes" id="UP000000813">
    <property type="component" value="Chromosome circular"/>
</dbReference>
<dbReference type="GO" id="GO:0005829">
    <property type="term" value="C:cytosol"/>
    <property type="evidence" value="ECO:0007669"/>
    <property type="project" value="TreeGrafter"/>
</dbReference>
<dbReference type="GO" id="GO:0003862">
    <property type="term" value="F:3-isopropylmalate dehydrogenase activity"/>
    <property type="evidence" value="ECO:0007669"/>
    <property type="project" value="UniProtKB-UniRule"/>
</dbReference>
<dbReference type="GO" id="GO:0000287">
    <property type="term" value="F:magnesium ion binding"/>
    <property type="evidence" value="ECO:0007669"/>
    <property type="project" value="InterPro"/>
</dbReference>
<dbReference type="GO" id="GO:0051287">
    <property type="term" value="F:NAD binding"/>
    <property type="evidence" value="ECO:0007669"/>
    <property type="project" value="InterPro"/>
</dbReference>
<dbReference type="GO" id="GO:0009098">
    <property type="term" value="P:L-leucine biosynthetic process"/>
    <property type="evidence" value="ECO:0007669"/>
    <property type="project" value="UniProtKB-UniRule"/>
</dbReference>
<dbReference type="FunFam" id="3.40.718.10:FF:000006">
    <property type="entry name" value="3-isopropylmalate dehydrogenase"/>
    <property type="match status" value="1"/>
</dbReference>
<dbReference type="Gene3D" id="3.40.718.10">
    <property type="entry name" value="Isopropylmalate Dehydrogenase"/>
    <property type="match status" value="1"/>
</dbReference>
<dbReference type="HAMAP" id="MF_01033">
    <property type="entry name" value="LeuB_type1"/>
    <property type="match status" value="1"/>
</dbReference>
<dbReference type="InterPro" id="IPR019818">
    <property type="entry name" value="IsoCit/isopropylmalate_DH_CS"/>
</dbReference>
<dbReference type="InterPro" id="IPR024084">
    <property type="entry name" value="IsoPropMal-DH-like_dom"/>
</dbReference>
<dbReference type="InterPro" id="IPR004429">
    <property type="entry name" value="Isopropylmalate_DH"/>
</dbReference>
<dbReference type="NCBIfam" id="TIGR00169">
    <property type="entry name" value="leuB"/>
    <property type="match status" value="1"/>
</dbReference>
<dbReference type="PANTHER" id="PTHR42979">
    <property type="entry name" value="3-ISOPROPYLMALATE DEHYDROGENASE"/>
    <property type="match status" value="1"/>
</dbReference>
<dbReference type="PANTHER" id="PTHR42979:SF1">
    <property type="entry name" value="3-ISOPROPYLMALATE DEHYDROGENASE"/>
    <property type="match status" value="1"/>
</dbReference>
<dbReference type="Pfam" id="PF00180">
    <property type="entry name" value="Iso_dh"/>
    <property type="match status" value="1"/>
</dbReference>
<dbReference type="SMART" id="SM01329">
    <property type="entry name" value="Iso_dh"/>
    <property type="match status" value="1"/>
</dbReference>
<dbReference type="SUPFAM" id="SSF53659">
    <property type="entry name" value="Isocitrate/Isopropylmalate dehydrogenase-like"/>
    <property type="match status" value="1"/>
</dbReference>
<dbReference type="PROSITE" id="PS00470">
    <property type="entry name" value="IDH_IMDH"/>
    <property type="match status" value="1"/>
</dbReference>
<sequence length="370" mass="39659">MTVRSLFLLPGDGIGPEAMTEVRKLIEYMNSAHNAGFTVSEGLVGGSAYDAHGVAISDADMEKALAADAILFGAVGGPKWDGVPYEHRPEAGLLRLRKDLELFANLRPAICYPALAAASSLKPELVEGLDILIVRELTGGVYFGEPKQIIDLGNGQKRGIDTQIYDTFEIERIASVAFELARSRDNRVCSMEKRNVMKSGVLWNQVVTETHAAKYKDVQLEHMLADAGGMQLVRKPKQFDVIVTDNLFGDMLSDVAAMLTGSLGMLPSASLGAPDAKTGKRKAMYEPVHGSAPDIAGKSIANPIAMIASFAMCLRYSFNMVDEATKLEAAIANVLDKGIRTADIMADGCRQVGTSDMGDAVLAEFKALSA</sequence>
<comment type="function">
    <text evidence="1">Catalyzes the oxidation of 3-carboxy-2-hydroxy-4-methylpentanoate (3-isopropylmalate) to 3-carboxy-4-methyl-2-oxopentanoate. The product decarboxylates to 4-methyl-2 oxopentanoate (By similarity).</text>
</comment>
<comment type="catalytic activity">
    <reaction>
        <text>(2R,3S)-3-isopropylmalate + NAD(+) = 4-methyl-2-oxopentanoate + CO2 + NADH</text>
        <dbReference type="Rhea" id="RHEA:32271"/>
        <dbReference type="ChEBI" id="CHEBI:16526"/>
        <dbReference type="ChEBI" id="CHEBI:17865"/>
        <dbReference type="ChEBI" id="CHEBI:35121"/>
        <dbReference type="ChEBI" id="CHEBI:57540"/>
        <dbReference type="ChEBI" id="CHEBI:57945"/>
        <dbReference type="EC" id="1.1.1.85"/>
    </reaction>
</comment>
<comment type="cofactor">
    <cofactor evidence="1">
        <name>Mg(2+)</name>
        <dbReference type="ChEBI" id="CHEBI:18420"/>
    </cofactor>
    <cofactor evidence="1">
        <name>Mn(2+)</name>
        <dbReference type="ChEBI" id="CHEBI:29035"/>
    </cofactor>
    <text evidence="1">Binds 1 Mg(2+) or Mn(2+) ion per subunit.</text>
</comment>
<comment type="pathway">
    <text>Amino-acid biosynthesis; L-leucine biosynthesis; L-leucine from 3-methyl-2-oxobutanoate: step 3/4.</text>
</comment>
<comment type="subunit">
    <text>Homodimer.</text>
</comment>
<comment type="subcellular location">
    <subcellularLocation>
        <location>Cytoplasm</location>
    </subcellularLocation>
</comment>
<comment type="similarity">
    <text evidence="2">Belongs to the isocitrate and isopropylmalate dehydrogenases family. LeuB type 1 subfamily.</text>
</comment>